<accession>Q2YUH6</accession>
<comment type="function">
    <text evidence="1">Part of the high-affinity ATP-driven potassium transport (or Kdp) system, which catalyzes the hydrolysis of ATP coupled with the electrogenic transport of potassium into the cytoplasm. This subunit binds the extracellular potassium ions and delivers the ions to the membrane domain of KdpB through an intramembrane tunnel.</text>
</comment>
<comment type="subunit">
    <text evidence="1">The system is composed of three essential subunits: KdpA, KdpB and KdpC.</text>
</comment>
<comment type="subcellular location">
    <subcellularLocation>
        <location evidence="1">Cell membrane</location>
        <topology evidence="1">Multi-pass membrane protein</topology>
    </subcellularLocation>
</comment>
<comment type="similarity">
    <text evidence="1">Belongs to the KdpA family.</text>
</comment>
<gene>
    <name evidence="1" type="primary">kdpA</name>
    <name type="ordered locus">SAB1962c</name>
</gene>
<name>KDPA_STAAB</name>
<dbReference type="EMBL" id="AJ938182">
    <property type="protein sequence ID" value="CAI81651.1"/>
    <property type="molecule type" value="Genomic_DNA"/>
</dbReference>
<dbReference type="RefSeq" id="WP_000402642.1">
    <property type="nucleotide sequence ID" value="NC_007622.1"/>
</dbReference>
<dbReference type="SMR" id="Q2YUH6"/>
<dbReference type="KEGG" id="sab:SAB1962c"/>
<dbReference type="HOGENOM" id="CLU_018614_3_0_9"/>
<dbReference type="GO" id="GO:0005886">
    <property type="term" value="C:plasma membrane"/>
    <property type="evidence" value="ECO:0007669"/>
    <property type="project" value="UniProtKB-SubCell"/>
</dbReference>
<dbReference type="GO" id="GO:0008556">
    <property type="term" value="F:P-type potassium transmembrane transporter activity"/>
    <property type="evidence" value="ECO:0007669"/>
    <property type="project" value="InterPro"/>
</dbReference>
<dbReference type="GO" id="GO:0030955">
    <property type="term" value="F:potassium ion binding"/>
    <property type="evidence" value="ECO:0007669"/>
    <property type="project" value="UniProtKB-UniRule"/>
</dbReference>
<dbReference type="HAMAP" id="MF_00275">
    <property type="entry name" value="KdpA"/>
    <property type="match status" value="1"/>
</dbReference>
<dbReference type="InterPro" id="IPR004623">
    <property type="entry name" value="KdpA"/>
</dbReference>
<dbReference type="NCBIfam" id="TIGR00680">
    <property type="entry name" value="kdpA"/>
    <property type="match status" value="1"/>
</dbReference>
<dbReference type="PANTHER" id="PTHR30607">
    <property type="entry name" value="POTASSIUM-TRANSPORTING ATPASE A CHAIN"/>
    <property type="match status" value="1"/>
</dbReference>
<dbReference type="PANTHER" id="PTHR30607:SF2">
    <property type="entry name" value="POTASSIUM-TRANSPORTING ATPASE POTASSIUM-BINDING SUBUNIT"/>
    <property type="match status" value="1"/>
</dbReference>
<dbReference type="Pfam" id="PF03814">
    <property type="entry name" value="KdpA"/>
    <property type="match status" value="1"/>
</dbReference>
<dbReference type="PIRSF" id="PIRSF001294">
    <property type="entry name" value="K_ATPaseA"/>
    <property type="match status" value="1"/>
</dbReference>
<proteinExistence type="inferred from homology"/>
<evidence type="ECO:0000255" key="1">
    <source>
        <dbReference type="HAMAP-Rule" id="MF_00275"/>
    </source>
</evidence>
<sequence>MEIILFLTMMVMIAYVFSGYLYRVALVQSSRVDLIFTRFENMCFKIIGTDLEHMSAKTYVKHFLAFNGFMGLITFVLLIVQQWLFLNPNHNLNQSIDLAFNTAISFLTNSNLQHYNGESGVTYLTQMIVMTYLMFTSSASGYAVCIAMLRRLTGLTNIIGNFYQDIVRFIVRVLLPLSCLISILLMTQGVPQTLHANLMIRTLSGHIQHIAFGPIASLESIKHLGTNGGGFLAGNSATPFENPNIWSDFIEMGSMMLLPMSMLFLFGRMLSRHGKRVHRHALILFVAMFFIFIAILTLTMWSEYRGNPILANLGIYGPNMEGKEVRFGAGLSALFTVITTAFTTGSVNNMHDSLTPLGGLGPMVLMMLNVVFGGEGVGLMNLLIYVLLTVFICSLMVGKTPEYLNMPIGAREMKCIVLVFLIHPILILVFSALAFMIPGASESITNPSFHGISQVMYEMTSAAANNGSGFEGLKDDTTFWNISTGIIMLLSRYIPIILQLLIASSLVNKKSYHQDKYTIAIDKPYFGVSLIVFIVLLSGLTFIPVLLLGPIGEFLTLK</sequence>
<reference key="1">
    <citation type="journal article" date="2007" name="PLoS ONE">
        <title>Molecular correlates of host specialization in Staphylococcus aureus.</title>
        <authorList>
            <person name="Herron-Olson L."/>
            <person name="Fitzgerald J.R."/>
            <person name="Musser J.M."/>
            <person name="Kapur V."/>
        </authorList>
    </citation>
    <scope>NUCLEOTIDE SEQUENCE [LARGE SCALE GENOMIC DNA]</scope>
    <source>
        <strain>bovine RF122 / ET3-1</strain>
    </source>
</reference>
<organism>
    <name type="scientific">Staphylococcus aureus (strain bovine RF122 / ET3-1)</name>
    <dbReference type="NCBI Taxonomy" id="273036"/>
    <lineage>
        <taxon>Bacteria</taxon>
        <taxon>Bacillati</taxon>
        <taxon>Bacillota</taxon>
        <taxon>Bacilli</taxon>
        <taxon>Bacillales</taxon>
        <taxon>Staphylococcaceae</taxon>
        <taxon>Staphylococcus</taxon>
    </lineage>
</organism>
<feature type="chain" id="PRO_1000022249" description="Potassium-transporting ATPase potassium-binding subunit">
    <location>
        <begin position="1"/>
        <end position="558"/>
    </location>
</feature>
<feature type="transmembrane region" description="Helical" evidence="1">
    <location>
        <begin position="1"/>
        <end position="21"/>
    </location>
</feature>
<feature type="transmembrane region" description="Helical" evidence="1">
    <location>
        <begin position="66"/>
        <end position="86"/>
    </location>
</feature>
<feature type="transmembrane region" description="Helical" evidence="1">
    <location>
        <begin position="127"/>
        <end position="147"/>
    </location>
</feature>
<feature type="transmembrane region" description="Helical" evidence="1">
    <location>
        <begin position="166"/>
        <end position="186"/>
    </location>
</feature>
<feature type="transmembrane region" description="Helical" evidence="1">
    <location>
        <begin position="245"/>
        <end position="265"/>
    </location>
</feature>
<feature type="transmembrane region" description="Helical" evidence="1">
    <location>
        <begin position="281"/>
        <end position="301"/>
    </location>
</feature>
<feature type="transmembrane region" description="Helical" evidence="1">
    <location>
        <begin position="327"/>
        <end position="347"/>
    </location>
</feature>
<feature type="transmembrane region" description="Helical" evidence="1">
    <location>
        <begin position="354"/>
        <end position="374"/>
    </location>
</feature>
<feature type="transmembrane region" description="Helical" evidence="1">
    <location>
        <begin position="377"/>
        <end position="397"/>
    </location>
</feature>
<feature type="transmembrane region" description="Helical" evidence="1">
    <location>
        <begin position="416"/>
        <end position="436"/>
    </location>
</feature>
<feature type="transmembrane region" description="Helical" evidence="1">
    <location>
        <begin position="482"/>
        <end position="502"/>
    </location>
</feature>
<feature type="transmembrane region" description="Helical" evidence="1">
    <location>
        <begin position="531"/>
        <end position="551"/>
    </location>
</feature>
<protein>
    <recommendedName>
        <fullName evidence="1">Potassium-transporting ATPase potassium-binding subunit</fullName>
    </recommendedName>
    <alternativeName>
        <fullName evidence="1">ATP phosphohydrolase [potassium-transporting] A chain</fullName>
    </alternativeName>
    <alternativeName>
        <fullName evidence="1">Potassium-binding and translocating subunit A</fullName>
    </alternativeName>
    <alternativeName>
        <fullName evidence="1">Potassium-translocating ATPase A chain</fullName>
    </alternativeName>
</protein>
<keyword id="KW-1003">Cell membrane</keyword>
<keyword id="KW-0406">Ion transport</keyword>
<keyword id="KW-0472">Membrane</keyword>
<keyword id="KW-0630">Potassium</keyword>
<keyword id="KW-0633">Potassium transport</keyword>
<keyword id="KW-0812">Transmembrane</keyword>
<keyword id="KW-1133">Transmembrane helix</keyword>
<keyword id="KW-0813">Transport</keyword>